<comment type="function">
    <text evidence="1 5 6">Component of the molecular motor that translocates viral genomic DNA in empty capsid during DNA packaging. Forms a tripartite terminase complex together with TRM2 and TRM3 in the host cytoplasm. Once the complex reaches the host nucleus, it interacts with the capsid portal vertex. This portal forms a ring in which genomic DNA is translocated into the capsid. TRM1 carries an endonuclease activity that plays an important role for the cleavage of concatemeric viral DNA into unit length genomes.</text>
</comment>
<comment type="subunit">
    <text evidence="1 3 4 7">Associates with TRM2 and TRM3 to form the tripartite terminase complex. Interacts with portal protein.</text>
</comment>
<comment type="interaction">
    <interactant intactId="EBI-7032948">
        <id>P10212</id>
    </interactant>
    <interactant intactId="EBI-7033000">
        <id>P10217</id>
        <label>TRM2</label>
    </interactant>
    <organismsDiffer>false</organismsDiffer>
    <experiments>6</experiments>
</comment>
<comment type="interaction">
    <interactant intactId="EBI-7032948">
        <id>P10212</id>
    </interactant>
    <interactant intactId="EBI-7032965">
        <id>P04295</id>
        <label>TRM3</label>
    </interactant>
    <organismsDiffer>false</organismsDiffer>
    <experiments>8</experiments>
</comment>
<comment type="subcellular location">
    <subcellularLocation>
        <location evidence="1 7">Host nucleus</location>
    </subcellularLocation>
    <text evidence="1">Found associated with the external surface of the viral capsid during assembly and DNA packaging, but seems absent in extracellular mature virions.</text>
</comment>
<comment type="similarity">
    <text evidence="1">Belongs to the herpesviridae TRM1 protein family.</text>
</comment>
<organism>
    <name type="scientific">Human herpesvirus 1 (strain 17)</name>
    <name type="common">HHV-1</name>
    <name type="synonym">Human herpes simplex virus 1</name>
    <dbReference type="NCBI Taxonomy" id="10299"/>
    <lineage>
        <taxon>Viruses</taxon>
        <taxon>Duplodnaviria</taxon>
        <taxon>Heunggongvirae</taxon>
        <taxon>Peploviricota</taxon>
        <taxon>Herviviricetes</taxon>
        <taxon>Herpesvirales</taxon>
        <taxon>Orthoherpesviridae</taxon>
        <taxon>Alphaherpesvirinae</taxon>
        <taxon>Simplexvirus</taxon>
        <taxon>Simplexvirus humanalpha1</taxon>
        <taxon>Human herpesvirus 1</taxon>
    </lineage>
</organism>
<feature type="chain" id="PRO_0000115874" description="Tripartite terminase subunit 1">
    <location>
        <begin position="1"/>
        <end position="785"/>
    </location>
</feature>
<feature type="zinc finger region" description="C3H1-type" evidence="1">
    <location>
        <begin position="197"/>
        <end position="225"/>
    </location>
</feature>
<feature type="region of interest" description="Disordered" evidence="2">
    <location>
        <begin position="433"/>
        <end position="452"/>
    </location>
</feature>
<feature type="region of interest" description="Disordered" evidence="2">
    <location>
        <begin position="457"/>
        <end position="489"/>
    </location>
</feature>
<feature type="binding site" evidence="1">
    <location>
        <begin position="696"/>
        <end position="703"/>
    </location>
    <ligand>
        <name>ATP</name>
        <dbReference type="ChEBI" id="CHEBI:30616"/>
    </ligand>
</feature>
<feature type="helix" evidence="8">
    <location>
        <begin position="7"/>
        <end position="32"/>
    </location>
</feature>
<feature type="helix" evidence="8">
    <location>
        <begin position="37"/>
        <end position="40"/>
    </location>
</feature>
<feature type="helix" evidence="8">
    <location>
        <begin position="41"/>
        <end position="43"/>
    </location>
</feature>
<feature type="helix" evidence="8">
    <location>
        <begin position="44"/>
        <end position="57"/>
    </location>
</feature>
<feature type="turn" evidence="8">
    <location>
        <begin position="58"/>
        <end position="60"/>
    </location>
</feature>
<feature type="helix" evidence="8">
    <location>
        <begin position="61"/>
        <end position="69"/>
    </location>
</feature>
<feature type="helix" evidence="8">
    <location>
        <begin position="75"/>
        <end position="100"/>
    </location>
</feature>
<feature type="turn" evidence="8">
    <location>
        <begin position="101"/>
        <end position="103"/>
    </location>
</feature>
<feature type="turn" evidence="8">
    <location>
        <begin position="108"/>
        <end position="116"/>
    </location>
</feature>
<feature type="strand" evidence="8">
    <location>
        <begin position="117"/>
        <end position="119"/>
    </location>
</feature>
<feature type="helix" evidence="8">
    <location>
        <begin position="144"/>
        <end position="155"/>
    </location>
</feature>
<feature type="turn" evidence="8">
    <location>
        <begin position="163"/>
        <end position="168"/>
    </location>
</feature>
<feature type="helix" evidence="8">
    <location>
        <begin position="170"/>
        <end position="179"/>
    </location>
</feature>
<feature type="strand" evidence="8">
    <location>
        <begin position="181"/>
        <end position="184"/>
    </location>
</feature>
<feature type="helix" evidence="8">
    <location>
        <begin position="200"/>
        <end position="206"/>
    </location>
</feature>
<feature type="helix" evidence="8">
    <location>
        <begin position="214"/>
        <end position="217"/>
    </location>
</feature>
<feature type="strand" evidence="8">
    <location>
        <begin position="225"/>
        <end position="227"/>
    </location>
</feature>
<feature type="helix" evidence="8">
    <location>
        <begin position="238"/>
        <end position="241"/>
    </location>
</feature>
<feature type="strand" evidence="8">
    <location>
        <begin position="242"/>
        <end position="245"/>
    </location>
</feature>
<feature type="helix" evidence="8">
    <location>
        <begin position="253"/>
        <end position="266"/>
    </location>
</feature>
<feature type="helix" evidence="8">
    <location>
        <begin position="308"/>
        <end position="313"/>
    </location>
</feature>
<feature type="helix" evidence="8">
    <location>
        <begin position="325"/>
        <end position="354"/>
    </location>
</feature>
<feature type="helix" evidence="8">
    <location>
        <begin position="362"/>
        <end position="365"/>
    </location>
</feature>
<feature type="helix" evidence="8">
    <location>
        <begin position="367"/>
        <end position="370"/>
    </location>
</feature>
<feature type="helix" evidence="8">
    <location>
        <begin position="377"/>
        <end position="380"/>
    </location>
</feature>
<feature type="strand" evidence="8">
    <location>
        <begin position="384"/>
        <end position="386"/>
    </location>
</feature>
<feature type="helix" evidence="8">
    <location>
        <begin position="388"/>
        <end position="399"/>
    </location>
</feature>
<feature type="turn" evidence="8">
    <location>
        <begin position="407"/>
        <end position="409"/>
    </location>
</feature>
<feature type="helix" evidence="8">
    <location>
        <begin position="410"/>
        <end position="413"/>
    </location>
</feature>
<feature type="helix" evidence="8">
    <location>
        <begin position="415"/>
        <end position="431"/>
    </location>
</feature>
<feature type="helix" evidence="8">
    <location>
        <begin position="485"/>
        <end position="506"/>
    </location>
</feature>
<feature type="turn" evidence="8">
    <location>
        <begin position="507"/>
        <end position="509"/>
    </location>
</feature>
<feature type="helix" evidence="8">
    <location>
        <begin position="512"/>
        <end position="530"/>
    </location>
</feature>
<feature type="helix" evidence="8">
    <location>
        <begin position="539"/>
        <end position="559"/>
    </location>
</feature>
<feature type="strand" evidence="8">
    <location>
        <begin position="562"/>
        <end position="566"/>
    </location>
</feature>
<feature type="helix" evidence="8">
    <location>
        <begin position="575"/>
        <end position="586"/>
    </location>
</feature>
<feature type="helix" evidence="8">
    <location>
        <begin position="593"/>
        <end position="595"/>
    </location>
</feature>
<feature type="helix" evidence="8">
    <location>
        <begin position="596"/>
        <end position="607"/>
    </location>
</feature>
<feature type="strand" evidence="8">
    <location>
        <begin position="615"/>
        <end position="619"/>
    </location>
</feature>
<feature type="helix" evidence="8">
    <location>
        <begin position="623"/>
        <end position="633"/>
    </location>
</feature>
<feature type="helix" evidence="8">
    <location>
        <begin position="638"/>
        <end position="640"/>
    </location>
</feature>
<feature type="helix" evidence="8">
    <location>
        <begin position="642"/>
        <end position="645"/>
    </location>
</feature>
<feature type="strand" evidence="8">
    <location>
        <begin position="647"/>
        <end position="649"/>
    </location>
</feature>
<feature type="turn" evidence="8">
    <location>
        <begin position="656"/>
        <end position="658"/>
    </location>
</feature>
<feature type="strand" evidence="8">
    <location>
        <begin position="674"/>
        <end position="676"/>
    </location>
</feature>
<feature type="helix" evidence="8">
    <location>
        <begin position="677"/>
        <end position="699"/>
    </location>
</feature>
<feature type="strand" evidence="8">
    <location>
        <begin position="717"/>
        <end position="719"/>
    </location>
</feature>
<feature type="strand" evidence="8">
    <location>
        <begin position="725"/>
        <end position="728"/>
    </location>
</feature>
<feature type="strand" evidence="8">
    <location>
        <begin position="737"/>
        <end position="742"/>
    </location>
</feature>
<feature type="strand" evidence="8">
    <location>
        <begin position="745"/>
        <end position="747"/>
    </location>
</feature>
<feature type="strand" evidence="8">
    <location>
        <begin position="754"/>
        <end position="760"/>
    </location>
</feature>
<feature type="helix" evidence="8">
    <location>
        <begin position="761"/>
        <end position="772"/>
    </location>
</feature>
<evidence type="ECO:0000255" key="1">
    <source>
        <dbReference type="HAMAP-Rule" id="MF_04014"/>
    </source>
</evidence>
<evidence type="ECO:0000256" key="2">
    <source>
        <dbReference type="SAM" id="MobiDB-lite"/>
    </source>
</evidence>
<evidence type="ECO:0000269" key="3">
    <source>
    </source>
</evidence>
<evidence type="ECO:0000269" key="4">
    <source>
    </source>
</evidence>
<evidence type="ECO:0000269" key="5">
    <source>
    </source>
</evidence>
<evidence type="ECO:0000269" key="6">
    <source>
    </source>
</evidence>
<evidence type="ECO:0000269" key="7">
    <source>
    </source>
</evidence>
<evidence type="ECO:0007829" key="8">
    <source>
        <dbReference type="PDB" id="6M5R"/>
    </source>
</evidence>
<reference key="1">
    <citation type="journal article" date="1988" name="J. Gen. Virol.">
        <title>The complete DNA sequence of the long unique region in the genome of herpes simplex virus type 1.</title>
        <authorList>
            <person name="McGeoch D.J."/>
            <person name="Dalrymple M.A."/>
            <person name="Davison A.J."/>
            <person name="Dolan A."/>
            <person name="Frame M.C."/>
            <person name="McNab D."/>
            <person name="Perry L.J."/>
            <person name="Scott J.E."/>
            <person name="Taylor P."/>
        </authorList>
    </citation>
    <scope>NUCLEOTIDE SEQUENCE [GENOMIC DNA]</scope>
</reference>
<reference key="2">
    <citation type="journal article" date="1998" name="Virology">
        <title>Herpes simplex virus 1 DNA cleavage/packaging: the UL28 gene encodes a minor component of B capsids.</title>
        <authorList>
            <person name="Taus N.S."/>
            <person name="Baines J.D."/>
        </authorList>
    </citation>
    <scope>FUNCTION</scope>
    <source>
        <strain>F</strain>
    </source>
</reference>
<reference key="3">
    <citation type="journal article" date="1999" name="J. Virol.">
        <title>Physical and functional interactions between the herpes simplex virus UL15 and UL28 DNA cleavage and packaging proteins.</title>
        <authorList>
            <person name="Koslowski K.M."/>
            <person name="Shaver P.R."/>
            <person name="Casey J.T. II"/>
            <person name="Wilson T."/>
            <person name="Yamanaka G."/>
            <person name="Sheaffer A.K."/>
            <person name="Tenney D.J."/>
            <person name="Pederson N.E."/>
        </authorList>
    </citation>
    <scope>INTERACTION WITH UL15</scope>
    <scope>SUBCELLULAR LOCATION</scope>
    <source>
        <strain>F</strain>
    </source>
</reference>
<reference key="4">
    <citation type="journal article" date="2003" name="J. Virol.">
        <title>Herpes simplex virus type 1 portal protein UL6 interacts with the putative terminase subunits UL15 and UL28.</title>
        <authorList>
            <person name="White C.A."/>
            <person name="Stow N.D."/>
            <person name="Patel A.H."/>
            <person name="Hughes M."/>
            <person name="Preston V.G."/>
        </authorList>
    </citation>
    <scope>INTERACTION WITH UL6</scope>
    <source>
        <strain>F</strain>
    </source>
</reference>
<reference key="5">
    <citation type="journal article" date="2006" name="J. Virol.">
        <title>The putative terminase subunit of herpes simplex virus 1 encoded by UL28 is necessary and sufficient to mediate interaction between pUL15 and pUL33.</title>
        <authorList>
            <person name="Yang K."/>
            <person name="Baines J.D."/>
        </authorList>
    </citation>
    <scope>INTERACTION WITH UL33</scope>
    <source>
        <strain>F</strain>
    </source>
</reference>
<reference key="6">
    <citation type="journal article" date="2006" name="J. Virol.">
        <title>Herpes simplex virus 1 DNA packaging proteins encoded by UL6, UL15, UL17, UL28, and UL33 are located on the external surface of the viral capsid.</title>
        <authorList>
            <person name="Wills E."/>
            <person name="Scholtes L."/>
            <person name="Baines J.D."/>
        </authorList>
    </citation>
    <scope>FUNCTION</scope>
    <source>
        <strain>F</strain>
    </source>
</reference>
<organismHost>
    <name type="scientific">Homo sapiens</name>
    <name type="common">Human</name>
    <dbReference type="NCBI Taxonomy" id="9606"/>
</organismHost>
<keyword id="KW-0002">3D-structure</keyword>
<keyword id="KW-0067">ATP-binding</keyword>
<keyword id="KW-1048">Host nucleus</keyword>
<keyword id="KW-0426">Late protein</keyword>
<keyword id="KW-0479">Metal-binding</keyword>
<keyword id="KW-0547">Nucleotide-binding</keyword>
<keyword id="KW-1185">Reference proteome</keyword>
<keyword id="KW-0231">Viral genome packaging</keyword>
<keyword id="KW-1188">Viral release from host cell</keyword>
<keyword id="KW-0862">Zinc</keyword>
<keyword id="KW-0863">Zinc-finger</keyword>
<name>TRM1_HHV11</name>
<dbReference type="EMBL" id="X14112">
    <property type="protein sequence ID" value="CAA32321.1"/>
    <property type="molecule type" value="Genomic_DNA"/>
</dbReference>
<dbReference type="PIR" id="A30085">
    <property type="entry name" value="WMBEW8"/>
</dbReference>
<dbReference type="RefSeq" id="YP_009137103.1">
    <property type="nucleotide sequence ID" value="NC_001806.2"/>
</dbReference>
<dbReference type="PDB" id="6M5R">
    <property type="method" value="EM"/>
    <property type="resolution" value="3.50 A"/>
    <property type="chains" value="B=2-775"/>
</dbReference>
<dbReference type="PDB" id="6M5S">
    <property type="method" value="EM"/>
    <property type="resolution" value="3.90 A"/>
    <property type="chains" value="B=2-775"/>
</dbReference>
<dbReference type="PDB" id="6M5U">
    <property type="method" value="EM"/>
    <property type="resolution" value="3.80 A"/>
    <property type="chains" value="B=2-775"/>
</dbReference>
<dbReference type="PDB" id="6M5V">
    <property type="method" value="EM"/>
    <property type="resolution" value="4.50 A"/>
    <property type="chains" value="B=2-772"/>
</dbReference>
<dbReference type="PDBsum" id="6M5R"/>
<dbReference type="PDBsum" id="6M5S"/>
<dbReference type="PDBsum" id="6M5U"/>
<dbReference type="PDBsum" id="6M5V"/>
<dbReference type="EMDB" id="EMD-30090"/>
<dbReference type="EMDB" id="EMD-30091"/>
<dbReference type="EMDB" id="EMD-30093"/>
<dbReference type="EMDB" id="EMD-30094"/>
<dbReference type="SMR" id="P10212"/>
<dbReference type="BioGRID" id="971470">
    <property type="interactions" value="1"/>
</dbReference>
<dbReference type="IntAct" id="P10212">
    <property type="interactions" value="3"/>
</dbReference>
<dbReference type="MINT" id="P10212"/>
<dbReference type="DNASU" id="2703457"/>
<dbReference type="GeneID" id="2703457"/>
<dbReference type="KEGG" id="vg:2703457"/>
<dbReference type="Proteomes" id="UP000009294">
    <property type="component" value="Segment"/>
</dbReference>
<dbReference type="GO" id="GO:0042025">
    <property type="term" value="C:host cell nucleus"/>
    <property type="evidence" value="ECO:0007669"/>
    <property type="project" value="UniProtKB-SubCell"/>
</dbReference>
<dbReference type="GO" id="GO:0005524">
    <property type="term" value="F:ATP binding"/>
    <property type="evidence" value="ECO:0007669"/>
    <property type="project" value="UniProtKB-KW"/>
</dbReference>
<dbReference type="GO" id="GO:0008270">
    <property type="term" value="F:zinc ion binding"/>
    <property type="evidence" value="ECO:0007669"/>
    <property type="project" value="UniProtKB-KW"/>
</dbReference>
<dbReference type="GO" id="GO:0019073">
    <property type="term" value="P:viral DNA genome packaging"/>
    <property type="evidence" value="ECO:0007669"/>
    <property type="project" value="InterPro"/>
</dbReference>
<dbReference type="HAMAP" id="MF_04014">
    <property type="entry name" value="HSV_TRM1"/>
    <property type="match status" value="1"/>
</dbReference>
<dbReference type="InterPro" id="IPR000501">
    <property type="entry name" value="UL28/UL56"/>
</dbReference>
<dbReference type="Pfam" id="PF01366">
    <property type="entry name" value="PRTP"/>
    <property type="match status" value="1"/>
</dbReference>
<gene>
    <name evidence="1" type="primary">TRM1</name>
    <name type="ordered locus">UL28</name>
</gene>
<accession>P10212</accession>
<protein>
    <recommendedName>
        <fullName evidence="1">Tripartite terminase subunit 1</fullName>
    </recommendedName>
</protein>
<sequence>MAAPVSEPTVARQKLLALLGQVQTYVFQIELLRRCDPHIGRGKLPQLKLNALQVRALRRRLRPGLEAQAGAFLTPLSVTLELLLEYAWREGERLLGSLETFATAGDVAAFFTETMGLARPCPYHQRVRLDTYGGTVHMELCFLHDVENFLKQLNYCHLITPSRGATAALERVREFMVGAVGSGLIVPPELSDPSHPCAVCFEELCVTANQGATIARRLADRICNHVTQQAQVRLDANELRRYLPHAAGLSDADRARALSVLDHALARTAGGDGQPHPSPENDSVRKEADALLEAHDVFQATTPGLYAISELRFWLASGDRAGQTTMDAFASNLTALARRELQQETAAVAVELALFGRRAEHFDRAFGSHLAALDMVDALIIGGQATSPDDQIEALIRACYDHHLTTPLLRRLVSPEQCDEEALRRVLARMGAGGAADAPKGGAGPDDDGDRVAVEEGARGLGAPGGGGEDEDRRRGPGGQGPETWGDIATQAAADVRERRRLYADRLTKRSLASLGRCVREQRGELEKMLRVSVHGEVLPATFAAVANGFAARARFCALTAGAGTVIDNRSAPGVFDAHRFMRASLLRHQVDPALLPSITHRFFELVNGPLFDHSTHSFAQPPNTALYYSVENVGLLPHLKEELARFIMGAGGSGADWAVSEFQRFYCFDGISGITPTQRAAWRYIRELIIATTLFASVYRCGELELRRPDCSRPTSEGRYRYPPGVYLTYDSDCPLVAIVESAPDGCIGPRSVVVYDRDVFSILYSVLQHLAPRLPDGGHDGPP</sequence>
<proteinExistence type="evidence at protein level"/>